<evidence type="ECO:0000255" key="1">
    <source>
        <dbReference type="HAMAP-Rule" id="MF_00183"/>
    </source>
</evidence>
<dbReference type="EC" id="1.1.1.267" evidence="1"/>
<dbReference type="EMBL" id="BA000037">
    <property type="protein sequence ID" value="BAC95315.1"/>
    <property type="molecule type" value="Genomic_DNA"/>
</dbReference>
<dbReference type="SMR" id="Q7MIG6"/>
<dbReference type="STRING" id="672.VV93_v1c22700"/>
<dbReference type="KEGG" id="vvy:VV2551"/>
<dbReference type="PATRIC" id="fig|196600.6.peg.2555"/>
<dbReference type="eggNOG" id="COG0743">
    <property type="taxonomic scope" value="Bacteria"/>
</dbReference>
<dbReference type="HOGENOM" id="CLU_035714_4_0_6"/>
<dbReference type="UniPathway" id="UPA00056">
    <property type="reaction ID" value="UER00092"/>
</dbReference>
<dbReference type="Proteomes" id="UP000002675">
    <property type="component" value="Chromosome I"/>
</dbReference>
<dbReference type="GO" id="GO:0030604">
    <property type="term" value="F:1-deoxy-D-xylulose-5-phosphate reductoisomerase activity"/>
    <property type="evidence" value="ECO:0007669"/>
    <property type="project" value="UniProtKB-UniRule"/>
</dbReference>
<dbReference type="GO" id="GO:0030145">
    <property type="term" value="F:manganese ion binding"/>
    <property type="evidence" value="ECO:0007669"/>
    <property type="project" value="TreeGrafter"/>
</dbReference>
<dbReference type="GO" id="GO:0070402">
    <property type="term" value="F:NADPH binding"/>
    <property type="evidence" value="ECO:0007669"/>
    <property type="project" value="InterPro"/>
</dbReference>
<dbReference type="GO" id="GO:0051484">
    <property type="term" value="P:isopentenyl diphosphate biosynthetic process, methylerythritol 4-phosphate pathway involved in terpenoid biosynthetic process"/>
    <property type="evidence" value="ECO:0007669"/>
    <property type="project" value="TreeGrafter"/>
</dbReference>
<dbReference type="FunFam" id="1.10.1740.10:FF:000004">
    <property type="entry name" value="1-deoxy-D-xylulose 5-phosphate reductoisomerase"/>
    <property type="match status" value="1"/>
</dbReference>
<dbReference type="FunFam" id="3.40.50.720:FF:000045">
    <property type="entry name" value="1-deoxy-D-xylulose 5-phosphate reductoisomerase"/>
    <property type="match status" value="1"/>
</dbReference>
<dbReference type="Gene3D" id="1.10.1740.10">
    <property type="match status" value="1"/>
</dbReference>
<dbReference type="Gene3D" id="3.40.50.720">
    <property type="entry name" value="NAD(P)-binding Rossmann-like Domain"/>
    <property type="match status" value="1"/>
</dbReference>
<dbReference type="HAMAP" id="MF_00183">
    <property type="entry name" value="DXP_reductoisom"/>
    <property type="match status" value="1"/>
</dbReference>
<dbReference type="InterPro" id="IPR003821">
    <property type="entry name" value="DXP_reductoisomerase"/>
</dbReference>
<dbReference type="InterPro" id="IPR013644">
    <property type="entry name" value="DXP_reductoisomerase_C"/>
</dbReference>
<dbReference type="InterPro" id="IPR013512">
    <property type="entry name" value="DXP_reductoisomerase_N"/>
</dbReference>
<dbReference type="InterPro" id="IPR026877">
    <property type="entry name" value="DXPR_C"/>
</dbReference>
<dbReference type="InterPro" id="IPR036169">
    <property type="entry name" value="DXPR_C_sf"/>
</dbReference>
<dbReference type="InterPro" id="IPR036291">
    <property type="entry name" value="NAD(P)-bd_dom_sf"/>
</dbReference>
<dbReference type="NCBIfam" id="TIGR00243">
    <property type="entry name" value="Dxr"/>
    <property type="match status" value="1"/>
</dbReference>
<dbReference type="NCBIfam" id="NF003938">
    <property type="entry name" value="PRK05447.1-1"/>
    <property type="match status" value="1"/>
</dbReference>
<dbReference type="NCBIfam" id="NF009114">
    <property type="entry name" value="PRK12464.1"/>
    <property type="match status" value="1"/>
</dbReference>
<dbReference type="PANTHER" id="PTHR30525">
    <property type="entry name" value="1-DEOXY-D-XYLULOSE 5-PHOSPHATE REDUCTOISOMERASE"/>
    <property type="match status" value="1"/>
</dbReference>
<dbReference type="PANTHER" id="PTHR30525:SF0">
    <property type="entry name" value="1-DEOXY-D-XYLULOSE 5-PHOSPHATE REDUCTOISOMERASE, CHLOROPLASTIC"/>
    <property type="match status" value="1"/>
</dbReference>
<dbReference type="Pfam" id="PF08436">
    <property type="entry name" value="DXP_redisom_C"/>
    <property type="match status" value="1"/>
</dbReference>
<dbReference type="Pfam" id="PF02670">
    <property type="entry name" value="DXP_reductoisom"/>
    <property type="match status" value="1"/>
</dbReference>
<dbReference type="Pfam" id="PF13288">
    <property type="entry name" value="DXPR_C"/>
    <property type="match status" value="1"/>
</dbReference>
<dbReference type="PIRSF" id="PIRSF006205">
    <property type="entry name" value="Dxp_reductismrs"/>
    <property type="match status" value="1"/>
</dbReference>
<dbReference type="SUPFAM" id="SSF69055">
    <property type="entry name" value="1-deoxy-D-xylulose-5-phosphate reductoisomerase, C-terminal domain"/>
    <property type="match status" value="1"/>
</dbReference>
<dbReference type="SUPFAM" id="SSF55347">
    <property type="entry name" value="Glyceraldehyde-3-phosphate dehydrogenase-like, C-terminal domain"/>
    <property type="match status" value="1"/>
</dbReference>
<dbReference type="SUPFAM" id="SSF51735">
    <property type="entry name" value="NAD(P)-binding Rossmann-fold domains"/>
    <property type="match status" value="1"/>
</dbReference>
<accession>Q7MIG6</accession>
<comment type="function">
    <text evidence="1">Catalyzes the NADPH-dependent rearrangement and reduction of 1-deoxy-D-xylulose-5-phosphate (DXP) to 2-C-methyl-D-erythritol 4-phosphate (MEP).</text>
</comment>
<comment type="catalytic activity">
    <reaction evidence="1">
        <text>2-C-methyl-D-erythritol 4-phosphate + NADP(+) = 1-deoxy-D-xylulose 5-phosphate + NADPH + H(+)</text>
        <dbReference type="Rhea" id="RHEA:13717"/>
        <dbReference type="ChEBI" id="CHEBI:15378"/>
        <dbReference type="ChEBI" id="CHEBI:57783"/>
        <dbReference type="ChEBI" id="CHEBI:57792"/>
        <dbReference type="ChEBI" id="CHEBI:58262"/>
        <dbReference type="ChEBI" id="CHEBI:58349"/>
        <dbReference type="EC" id="1.1.1.267"/>
    </reaction>
    <physiologicalReaction direction="right-to-left" evidence="1">
        <dbReference type="Rhea" id="RHEA:13719"/>
    </physiologicalReaction>
</comment>
<comment type="cofactor">
    <cofactor evidence="1">
        <name>Mg(2+)</name>
        <dbReference type="ChEBI" id="CHEBI:18420"/>
    </cofactor>
    <cofactor evidence="1">
        <name>Mn(2+)</name>
        <dbReference type="ChEBI" id="CHEBI:29035"/>
    </cofactor>
</comment>
<comment type="pathway">
    <text evidence="1">Isoprenoid biosynthesis; isopentenyl diphosphate biosynthesis via DXP pathway; isopentenyl diphosphate from 1-deoxy-D-xylulose 5-phosphate: step 1/6.</text>
</comment>
<comment type="similarity">
    <text evidence="1">Belongs to the DXR family.</text>
</comment>
<gene>
    <name evidence="1" type="primary">dxr</name>
    <name type="ordered locus">VV2551</name>
</gene>
<feature type="chain" id="PRO_0000163734" description="1-deoxy-D-xylulose 5-phosphate reductoisomerase">
    <location>
        <begin position="1"/>
        <end position="402"/>
    </location>
</feature>
<feature type="binding site" evidence="1">
    <location>
        <position position="10"/>
    </location>
    <ligand>
        <name>NADPH</name>
        <dbReference type="ChEBI" id="CHEBI:57783"/>
    </ligand>
</feature>
<feature type="binding site" evidence="1">
    <location>
        <position position="11"/>
    </location>
    <ligand>
        <name>NADPH</name>
        <dbReference type="ChEBI" id="CHEBI:57783"/>
    </ligand>
</feature>
<feature type="binding site" evidence="1">
    <location>
        <position position="12"/>
    </location>
    <ligand>
        <name>NADPH</name>
        <dbReference type="ChEBI" id="CHEBI:57783"/>
    </ligand>
</feature>
<feature type="binding site" evidence="1">
    <location>
        <position position="13"/>
    </location>
    <ligand>
        <name>NADPH</name>
        <dbReference type="ChEBI" id="CHEBI:57783"/>
    </ligand>
</feature>
<feature type="binding site" evidence="1">
    <location>
        <position position="38"/>
    </location>
    <ligand>
        <name>NADPH</name>
        <dbReference type="ChEBI" id="CHEBI:57783"/>
    </ligand>
</feature>
<feature type="binding site" evidence="1">
    <location>
        <position position="124"/>
    </location>
    <ligand>
        <name>NADPH</name>
        <dbReference type="ChEBI" id="CHEBI:57783"/>
    </ligand>
</feature>
<feature type="binding site" evidence="1">
    <location>
        <position position="125"/>
    </location>
    <ligand>
        <name>1-deoxy-D-xylulose 5-phosphate</name>
        <dbReference type="ChEBI" id="CHEBI:57792"/>
    </ligand>
</feature>
<feature type="binding site" evidence="1">
    <location>
        <position position="126"/>
    </location>
    <ligand>
        <name>NADPH</name>
        <dbReference type="ChEBI" id="CHEBI:57783"/>
    </ligand>
</feature>
<feature type="binding site" evidence="1">
    <location>
        <position position="150"/>
    </location>
    <ligand>
        <name>Mn(2+)</name>
        <dbReference type="ChEBI" id="CHEBI:29035"/>
    </ligand>
</feature>
<feature type="binding site" evidence="1">
    <location>
        <position position="151"/>
    </location>
    <ligand>
        <name>1-deoxy-D-xylulose 5-phosphate</name>
        <dbReference type="ChEBI" id="CHEBI:57792"/>
    </ligand>
</feature>
<feature type="binding site" evidence="1">
    <location>
        <position position="152"/>
    </location>
    <ligand>
        <name>1-deoxy-D-xylulose 5-phosphate</name>
        <dbReference type="ChEBI" id="CHEBI:57792"/>
    </ligand>
</feature>
<feature type="binding site" evidence="1">
    <location>
        <position position="152"/>
    </location>
    <ligand>
        <name>Mn(2+)</name>
        <dbReference type="ChEBI" id="CHEBI:29035"/>
    </ligand>
</feature>
<feature type="binding site" evidence="1">
    <location>
        <position position="186"/>
    </location>
    <ligand>
        <name>1-deoxy-D-xylulose 5-phosphate</name>
        <dbReference type="ChEBI" id="CHEBI:57792"/>
    </ligand>
</feature>
<feature type="binding site" evidence="1">
    <location>
        <position position="209"/>
    </location>
    <ligand>
        <name>1-deoxy-D-xylulose 5-phosphate</name>
        <dbReference type="ChEBI" id="CHEBI:57792"/>
    </ligand>
</feature>
<feature type="binding site" evidence="1">
    <location>
        <position position="215"/>
    </location>
    <ligand>
        <name>NADPH</name>
        <dbReference type="ChEBI" id="CHEBI:57783"/>
    </ligand>
</feature>
<feature type="binding site" evidence="1">
    <location>
        <position position="222"/>
    </location>
    <ligand>
        <name>1-deoxy-D-xylulose 5-phosphate</name>
        <dbReference type="ChEBI" id="CHEBI:57792"/>
    </ligand>
</feature>
<feature type="binding site" evidence="1">
    <location>
        <position position="227"/>
    </location>
    <ligand>
        <name>1-deoxy-D-xylulose 5-phosphate</name>
        <dbReference type="ChEBI" id="CHEBI:57792"/>
    </ligand>
</feature>
<feature type="binding site" evidence="1">
    <location>
        <position position="228"/>
    </location>
    <ligand>
        <name>1-deoxy-D-xylulose 5-phosphate</name>
        <dbReference type="ChEBI" id="CHEBI:57792"/>
    </ligand>
</feature>
<feature type="binding site" evidence="1">
    <location>
        <position position="231"/>
    </location>
    <ligand>
        <name>1-deoxy-D-xylulose 5-phosphate</name>
        <dbReference type="ChEBI" id="CHEBI:57792"/>
    </ligand>
</feature>
<feature type="binding site" evidence="1">
    <location>
        <position position="231"/>
    </location>
    <ligand>
        <name>Mn(2+)</name>
        <dbReference type="ChEBI" id="CHEBI:29035"/>
    </ligand>
</feature>
<keyword id="KW-0414">Isoprene biosynthesis</keyword>
<keyword id="KW-0464">Manganese</keyword>
<keyword id="KW-0479">Metal-binding</keyword>
<keyword id="KW-0521">NADP</keyword>
<keyword id="KW-0560">Oxidoreductase</keyword>
<sequence length="402" mass="43333">MQKLTILGATGSIGASTLKVIEQNPDKFSVVALAADSNVEKMQQLCQRWQPEFAVMANKEAALRLKMALAVLAPNTQVLGGQEALCYVATLEQVDSVMAAIVGAAGLVPTMAAVKAGKRILLANKEALVMSGQLFIDEVEKSGAQLLPVDSEHNAIFQCLPQAVQGNLGRCDLASQGVSHILLTGSGGPFRYTDVAELEAVTPEQAIAHPNWSMGPKISVDSATMMNKGLEYIEAKWLFNANRDQLKVIIHPQSVIHSMVQYLDGSVLAQMGEPDMATPIALTLSYPERVKAGVKPLDFTQVGELTFLQPDFERYPCLALAIEACYLGQHATTTLNAANEVAVAAFLARQIKFTDIARVNDSVLNQVCKQSLASGLDSLESLLELDRMARTLADEVVRERAQ</sequence>
<name>DXR_VIBVY</name>
<proteinExistence type="inferred from homology"/>
<reference key="1">
    <citation type="journal article" date="2003" name="Genome Res.">
        <title>Comparative genome analysis of Vibrio vulnificus, a marine pathogen.</title>
        <authorList>
            <person name="Chen C.-Y."/>
            <person name="Wu K.-M."/>
            <person name="Chang Y.-C."/>
            <person name="Chang C.-H."/>
            <person name="Tsai H.-C."/>
            <person name="Liao T.-L."/>
            <person name="Liu Y.-M."/>
            <person name="Chen H.-J."/>
            <person name="Shen A.B.-T."/>
            <person name="Li J.-C."/>
            <person name="Su T.-L."/>
            <person name="Shao C.-P."/>
            <person name="Lee C.-T."/>
            <person name="Hor L.-I."/>
            <person name="Tsai S.-F."/>
        </authorList>
    </citation>
    <scope>NUCLEOTIDE SEQUENCE [LARGE SCALE GENOMIC DNA]</scope>
    <source>
        <strain>YJ016</strain>
    </source>
</reference>
<organism>
    <name type="scientific">Vibrio vulnificus (strain YJ016)</name>
    <dbReference type="NCBI Taxonomy" id="196600"/>
    <lineage>
        <taxon>Bacteria</taxon>
        <taxon>Pseudomonadati</taxon>
        <taxon>Pseudomonadota</taxon>
        <taxon>Gammaproteobacteria</taxon>
        <taxon>Vibrionales</taxon>
        <taxon>Vibrionaceae</taxon>
        <taxon>Vibrio</taxon>
    </lineage>
</organism>
<protein>
    <recommendedName>
        <fullName evidence="1">1-deoxy-D-xylulose 5-phosphate reductoisomerase</fullName>
        <shortName evidence="1">DXP reductoisomerase</shortName>
        <ecNumber evidence="1">1.1.1.267</ecNumber>
    </recommendedName>
    <alternativeName>
        <fullName evidence="1">1-deoxyxylulose-5-phosphate reductoisomerase</fullName>
    </alternativeName>
    <alternativeName>
        <fullName evidence="1">2-C-methyl-D-erythritol 4-phosphate synthase</fullName>
    </alternativeName>
</protein>